<name>RS5_LIMRD</name>
<keyword id="KW-1185">Reference proteome</keyword>
<keyword id="KW-0687">Ribonucleoprotein</keyword>
<keyword id="KW-0689">Ribosomal protein</keyword>
<keyword id="KW-0694">RNA-binding</keyword>
<keyword id="KW-0699">rRNA-binding</keyword>
<comment type="function">
    <text evidence="1">With S4 and S12 plays an important role in translational accuracy.</text>
</comment>
<comment type="function">
    <text evidence="1">Located at the back of the 30S subunit body where it stabilizes the conformation of the head with respect to the body.</text>
</comment>
<comment type="subunit">
    <text evidence="1">Part of the 30S ribosomal subunit. Contacts proteins S4 and S8.</text>
</comment>
<comment type="domain">
    <text>The N-terminal domain interacts with the head of the 30S subunit; the C-terminal domain interacts with the body and contacts protein S4. The interaction surface between S4 and S5 is involved in control of translational fidelity.</text>
</comment>
<comment type="similarity">
    <text evidence="1">Belongs to the universal ribosomal protein uS5 family.</text>
</comment>
<reference key="1">
    <citation type="journal article" date="2011" name="PLoS Genet.">
        <title>The evolution of host specialization in the vertebrate gut symbiont Lactobacillus reuteri.</title>
        <authorList>
            <person name="Frese S.A."/>
            <person name="Benson A.K."/>
            <person name="Tannock G.W."/>
            <person name="Loach D.M."/>
            <person name="Kim J."/>
            <person name="Zhang M."/>
            <person name="Oh P.L."/>
            <person name="Heng N.C."/>
            <person name="Patil P.B."/>
            <person name="Juge N."/>
            <person name="Mackenzie D.A."/>
            <person name="Pearson B.M."/>
            <person name="Lapidus A."/>
            <person name="Dalin E."/>
            <person name="Tice H."/>
            <person name="Goltsman E."/>
            <person name="Land M."/>
            <person name="Hauser L."/>
            <person name="Ivanova N."/>
            <person name="Kyrpides N.C."/>
            <person name="Walter J."/>
        </authorList>
    </citation>
    <scope>NUCLEOTIDE SEQUENCE [LARGE SCALE GENOMIC DNA]</scope>
    <source>
        <strain>DSM 20016</strain>
    </source>
</reference>
<feature type="chain" id="PRO_0000323143" description="Small ribosomal subunit protein uS5">
    <location>
        <begin position="1"/>
        <end position="169"/>
    </location>
</feature>
<feature type="domain" description="S5 DRBM" evidence="1">
    <location>
        <begin position="14"/>
        <end position="77"/>
    </location>
</feature>
<protein>
    <recommendedName>
        <fullName evidence="1">Small ribosomal subunit protein uS5</fullName>
    </recommendedName>
    <alternativeName>
        <fullName evidence="2">30S ribosomal protein S5</fullName>
    </alternativeName>
</protein>
<evidence type="ECO:0000255" key="1">
    <source>
        <dbReference type="HAMAP-Rule" id="MF_01307"/>
    </source>
</evidence>
<evidence type="ECO:0000305" key="2"/>
<proteinExistence type="inferred from homology"/>
<gene>
    <name evidence="1" type="primary">rpsE</name>
    <name type="ordered locus">Lreu_1466</name>
</gene>
<dbReference type="EMBL" id="CP000705">
    <property type="protein sequence ID" value="ABQ83712.1"/>
    <property type="molecule type" value="Genomic_DNA"/>
</dbReference>
<dbReference type="RefSeq" id="WP_003664542.1">
    <property type="nucleotide sequence ID" value="NZ_AZDD01000010.1"/>
</dbReference>
<dbReference type="SMR" id="A5VLI8"/>
<dbReference type="STRING" id="557436.Lreu_1466"/>
<dbReference type="GeneID" id="77191462"/>
<dbReference type="KEGG" id="lre:Lreu_1466"/>
<dbReference type="PATRIC" id="fig|557436.17.peg.157"/>
<dbReference type="eggNOG" id="COG0098">
    <property type="taxonomic scope" value="Bacteria"/>
</dbReference>
<dbReference type="HOGENOM" id="CLU_065898_2_2_9"/>
<dbReference type="Proteomes" id="UP000001991">
    <property type="component" value="Chromosome"/>
</dbReference>
<dbReference type="GO" id="GO:0015935">
    <property type="term" value="C:small ribosomal subunit"/>
    <property type="evidence" value="ECO:0007669"/>
    <property type="project" value="InterPro"/>
</dbReference>
<dbReference type="GO" id="GO:0019843">
    <property type="term" value="F:rRNA binding"/>
    <property type="evidence" value="ECO:0007669"/>
    <property type="project" value="UniProtKB-UniRule"/>
</dbReference>
<dbReference type="GO" id="GO:0003735">
    <property type="term" value="F:structural constituent of ribosome"/>
    <property type="evidence" value="ECO:0007669"/>
    <property type="project" value="InterPro"/>
</dbReference>
<dbReference type="GO" id="GO:0006412">
    <property type="term" value="P:translation"/>
    <property type="evidence" value="ECO:0007669"/>
    <property type="project" value="UniProtKB-UniRule"/>
</dbReference>
<dbReference type="FunFam" id="3.30.160.20:FF:000001">
    <property type="entry name" value="30S ribosomal protein S5"/>
    <property type="match status" value="1"/>
</dbReference>
<dbReference type="FunFam" id="3.30.230.10:FF:000002">
    <property type="entry name" value="30S ribosomal protein S5"/>
    <property type="match status" value="1"/>
</dbReference>
<dbReference type="Gene3D" id="3.30.160.20">
    <property type="match status" value="1"/>
</dbReference>
<dbReference type="Gene3D" id="3.30.230.10">
    <property type="match status" value="1"/>
</dbReference>
<dbReference type="HAMAP" id="MF_01307_B">
    <property type="entry name" value="Ribosomal_uS5_B"/>
    <property type="match status" value="1"/>
</dbReference>
<dbReference type="InterPro" id="IPR020568">
    <property type="entry name" value="Ribosomal_Su5_D2-typ_SF"/>
</dbReference>
<dbReference type="InterPro" id="IPR000851">
    <property type="entry name" value="Ribosomal_uS5"/>
</dbReference>
<dbReference type="InterPro" id="IPR005712">
    <property type="entry name" value="Ribosomal_uS5_bac-type"/>
</dbReference>
<dbReference type="InterPro" id="IPR005324">
    <property type="entry name" value="Ribosomal_uS5_C"/>
</dbReference>
<dbReference type="InterPro" id="IPR013810">
    <property type="entry name" value="Ribosomal_uS5_N"/>
</dbReference>
<dbReference type="InterPro" id="IPR018192">
    <property type="entry name" value="Ribosomal_uS5_N_CS"/>
</dbReference>
<dbReference type="InterPro" id="IPR014721">
    <property type="entry name" value="Ribsml_uS5_D2-typ_fold_subgr"/>
</dbReference>
<dbReference type="NCBIfam" id="TIGR01021">
    <property type="entry name" value="rpsE_bact"/>
    <property type="match status" value="1"/>
</dbReference>
<dbReference type="PANTHER" id="PTHR48277">
    <property type="entry name" value="MITOCHONDRIAL RIBOSOMAL PROTEIN S5"/>
    <property type="match status" value="1"/>
</dbReference>
<dbReference type="PANTHER" id="PTHR48277:SF1">
    <property type="entry name" value="MITOCHONDRIAL RIBOSOMAL PROTEIN S5"/>
    <property type="match status" value="1"/>
</dbReference>
<dbReference type="Pfam" id="PF00333">
    <property type="entry name" value="Ribosomal_S5"/>
    <property type="match status" value="1"/>
</dbReference>
<dbReference type="Pfam" id="PF03719">
    <property type="entry name" value="Ribosomal_S5_C"/>
    <property type="match status" value="1"/>
</dbReference>
<dbReference type="SUPFAM" id="SSF54768">
    <property type="entry name" value="dsRNA-binding domain-like"/>
    <property type="match status" value="1"/>
</dbReference>
<dbReference type="SUPFAM" id="SSF54211">
    <property type="entry name" value="Ribosomal protein S5 domain 2-like"/>
    <property type="match status" value="1"/>
</dbReference>
<dbReference type="PROSITE" id="PS00585">
    <property type="entry name" value="RIBOSOMAL_S5"/>
    <property type="match status" value="1"/>
</dbReference>
<dbReference type="PROSITE" id="PS50881">
    <property type="entry name" value="S5_DSRBD"/>
    <property type="match status" value="1"/>
</dbReference>
<sequence>MASSEFIDPAKLDLDDQVVAINRITKVVKGGRRMRFAALVIVGDRKGHVGFGTGKAQEVPEAIRKAQAAAEKNLITVPIVGTTIPHEVIGVYGGGKIMLKPAVEGSGVAAGGAVRNVMDLAGVADVTSKRLGSNTPVNVVRATFEGLKQLKNAEEVAKLRGVSVDHLAE</sequence>
<accession>A5VLI8</accession>
<organism>
    <name type="scientific">Limosilactobacillus reuteri (strain DSM 20016)</name>
    <name type="common">Lactobacillus reuteri</name>
    <dbReference type="NCBI Taxonomy" id="557436"/>
    <lineage>
        <taxon>Bacteria</taxon>
        <taxon>Bacillati</taxon>
        <taxon>Bacillota</taxon>
        <taxon>Bacilli</taxon>
        <taxon>Lactobacillales</taxon>
        <taxon>Lactobacillaceae</taxon>
        <taxon>Limosilactobacillus</taxon>
    </lineage>
</organism>